<comment type="function">
    <text evidence="3">Functions as part of axonemal radial spoke complexes that play an important part in the motility of sperm and cilia.</text>
</comment>
<comment type="subunit">
    <text evidence="1 3">Homodimer (PubMed:27486783). Component of the axonemal radial spoke complex 1 (RS1), at least composed of spoke head proteins RSPH1, RSPH3, RSPH9 and the cilia-specific component RSPH4A or sperm-specific component RSPH6A, spoke stalk proteins RSPH14, DNAJB13, DYDC1, ROPN1L and NME5, and the anchor protein IQUB (By similarity). Interacts with SUN5 (By similarity). Interacts with IQUB (By similarity).</text>
</comment>
<comment type="interaction">
    <interactant intactId="EBI-11514233">
        <id>P59910</id>
    </interactant>
    <interactant intactId="EBI-739467">
        <id>Q9H8Y8</id>
        <label>GORASP2</label>
    </interactant>
    <organismsDiffer>false</organismsDiffer>
    <experiments>3</experiments>
</comment>
<comment type="interaction">
    <interactant intactId="EBI-11514233">
        <id>P59910</id>
    </interactant>
    <interactant intactId="EBI-2865388">
        <id>Q969G2</id>
        <label>LHX4</label>
    </interactant>
    <organismsDiffer>false</organismsDiffer>
    <experiments>3</experiments>
</comment>
<comment type="interaction">
    <interactant intactId="EBI-11514233">
        <id>P59910</id>
    </interactant>
    <interactant intactId="EBI-724076">
        <id>Q99750</id>
        <label>MDFI</label>
    </interactant>
    <organismsDiffer>false</organismsDiffer>
    <experiments>3</experiments>
</comment>
<comment type="interaction">
    <interactant intactId="EBI-11514233">
        <id>P59910</id>
    </interactant>
    <interactant intactId="EBI-11599933">
        <id>Q4VC12</id>
        <label>MSS51</label>
    </interactant>
    <organismsDiffer>false</organismsDiffer>
    <experiments>3</experiments>
</comment>
<comment type="interaction">
    <interactant intactId="EBI-11514233">
        <id>P59910</id>
    </interactant>
    <interactant intactId="EBI-14066006">
        <id>Q4G0R1</id>
        <label>PIBF1</label>
    </interactant>
    <organismsDiffer>false</organismsDiffer>
    <experiments>3</experiments>
</comment>
<comment type="interaction">
    <interactant intactId="EBI-11514233">
        <id>P59910</id>
    </interactant>
    <interactant intactId="EBI-79165">
        <id>Q9NRD5</id>
        <label>PICK1</label>
    </interactant>
    <organismsDiffer>false</organismsDiffer>
    <experiments>3</experiments>
</comment>
<comment type="interaction">
    <interactant intactId="EBI-11514233">
        <id>P59910</id>
    </interactant>
    <interactant intactId="EBI-746202">
        <id>O00444</id>
        <label>PLK4</label>
    </interactant>
    <organismsDiffer>false</organismsDiffer>
    <experiments>3</experiments>
</comment>
<comment type="interaction">
    <interactant intactId="EBI-11514233">
        <id>P59910</id>
    </interactant>
    <interactant intactId="EBI-11984839">
        <id>Q96QF0-7</id>
        <label>RAB3IP</label>
    </interactant>
    <organismsDiffer>false</organismsDiffer>
    <experiments>3</experiments>
</comment>
<comment type="interaction">
    <interactant intactId="EBI-11514233">
        <id>P59910</id>
    </interactant>
    <interactant intactId="EBI-693002">
        <id>Q8WYJ6</id>
        <label>SEPTIN1</label>
    </interactant>
    <organismsDiffer>false</organismsDiffer>
    <experiments>3</experiments>
</comment>
<comment type="interaction">
    <interactant intactId="EBI-11514233">
        <id>P59910</id>
    </interactant>
    <interactant intactId="EBI-12011552">
        <id>O75674-2</id>
        <label>TOM1L1</label>
    </interactant>
    <organismsDiffer>false</organismsDiffer>
    <experiments>3</experiments>
</comment>
<comment type="interaction">
    <interactant intactId="EBI-11514233">
        <id>P59910</id>
    </interactant>
    <interactant intactId="EBI-747793">
        <id>Q5D1E8</id>
        <label>ZC3H12A</label>
    </interactant>
    <organismsDiffer>false</organismsDiffer>
    <experiments>3</experiments>
</comment>
<comment type="interaction">
    <interactant intactId="EBI-11514233">
        <id>P59910</id>
    </interactant>
    <interactant intactId="EBI-527853">
        <id>Q9UGI0</id>
        <label>ZRANB1</label>
    </interactant>
    <organismsDiffer>false</organismsDiffer>
    <experiments>3</experiments>
</comment>
<comment type="interaction">
    <interactant intactId="EBI-11514233">
        <id>P59910</id>
    </interactant>
    <interactant intactId="EBI-6050648">
        <id>B4URF7</id>
        <label>PB2</label>
    </interactant>
    <organismsDiffer>true</organismsDiffer>
    <experiments>2</experiments>
</comment>
<comment type="subcellular location">
    <subcellularLocation>
        <location evidence="3">Cell projection</location>
        <location evidence="3">Cilium</location>
        <location evidence="3">Flagellum</location>
    </subcellularLocation>
    <text evidence="1 3">Localizes both to epithelial motile cilium and the sperm flagellum (PubMed:27486783). In spermatids, rapidly enriched in the coupling apparatus with the elongation of the spermatid. Tightly attached to the implantation fossa during the maturation of the spermatid. In mature spermatzoa evenly distributed along the flagellum (By similarity).</text>
</comment>
<comment type="alternative products">
    <event type="alternative splicing"/>
    <isoform>
        <id>P59910-1</id>
        <name>1</name>
        <sequence type="displayed"/>
    </isoform>
    <isoform>
        <id>P59910-2</id>
        <name>2</name>
        <name>TSARG5</name>
        <sequence type="described" ref="VSP_008519 VSP_008520"/>
    </isoform>
</comment>
<comment type="tissue specificity">
    <text evidence="3">Specifically expressed in testis and trachea.</text>
</comment>
<comment type="disease" evidence="3">
    <disease id="DI-04822">
        <name>Ciliary dyskinesia, primary, 34</name>
        <acronym>CILD34</acronym>
        <description>A form of primary ciliary dyskinesia, a disorder characterized by abnormalities of motile cilia. Respiratory infections leading to chronic inflammation and bronchiectasis are recurrent, due to defects in the respiratory cilia. CILD34 inheritance is autosomal recessive.</description>
        <dbReference type="MIM" id="617091"/>
    </disease>
    <text>The disease is caused by variants affecting the gene represented in this entry.</text>
</comment>
<organism>
    <name type="scientific">Homo sapiens</name>
    <name type="common">Human</name>
    <dbReference type="NCBI Taxonomy" id="9606"/>
    <lineage>
        <taxon>Eukaryota</taxon>
        <taxon>Metazoa</taxon>
        <taxon>Chordata</taxon>
        <taxon>Craniata</taxon>
        <taxon>Vertebrata</taxon>
        <taxon>Euteleostomi</taxon>
        <taxon>Mammalia</taxon>
        <taxon>Eutheria</taxon>
        <taxon>Euarchontoglires</taxon>
        <taxon>Primates</taxon>
        <taxon>Haplorrhini</taxon>
        <taxon>Catarrhini</taxon>
        <taxon>Hominidae</taxon>
        <taxon>Homo</taxon>
    </lineage>
</organism>
<feature type="chain" id="PRO_0000071039" description="DnaJ homolog subfamily B member 13">
    <location>
        <begin position="1"/>
        <end position="316"/>
    </location>
</feature>
<feature type="domain" description="J" evidence="2">
    <location>
        <begin position="4"/>
        <end position="68"/>
    </location>
</feature>
<feature type="splice variant" id="VSP_008519" description="In isoform 2." evidence="4">
    <location>
        <begin position="1"/>
        <end position="175"/>
    </location>
</feature>
<feature type="splice variant" id="VSP_008520" description="In isoform 2." evidence="4">
    <original>KDKILTIDVKPGWRQGTRITFEKEGD</original>
    <variation>METSRGRNLAKVTRPTSPCHLLASPA</variation>
    <location>
        <begin position="176"/>
        <end position="201"/>
    </location>
</feature>
<feature type="sequence variant" id="VAR_077053" description="In CILD34; loss of expression in patient cells; increased proteasome-mediated degradation; no effect on homodimerization; dbSNP:rs754776389." evidence="3">
    <original>M</original>
    <variation>R</variation>
    <location>
        <position position="278"/>
    </location>
</feature>
<sequence length="316" mass="36118">MGQDYYSVLGITRNSEDAQIKQAYRRLALKHHPLKSNEPSSAEIFRQIAEAYDVLSDPMKRGIYDKFGEEGLKGGIPLEFGSQTPWTTGYVFHGKPEKVFHEFFGGNNPFSEFFDAEGSEVDLNFGGLQGRGVKKQDPQVERDLYLSLEDLFFGCTKKIKISRRVLNEDGYSSTIKDKILTIDVKPGWRQGTRITFEKEGDQGPNIIPADIIFIVKEKLHPRFRRENDNLFFVNPIPLGKALTCCTVEVRTLDDRLLNIPINDIIHPKYFKKVPGEGMPLPEDPTKKGDLFIFFDIQFPTRLTPQKKQMLRQALLT</sequence>
<dbReference type="EMBL" id="AF419291">
    <property type="protein sequence ID" value="AAN32702.1"/>
    <property type="status" value="ALT_SEQ"/>
    <property type="molecule type" value="mRNA"/>
</dbReference>
<dbReference type="EMBL" id="AF516185">
    <property type="protein sequence ID" value="AAP47195.1"/>
    <property type="molecule type" value="mRNA"/>
</dbReference>
<dbReference type="EMBL" id="AY138810">
    <property type="protein sequence ID" value="AAN15929.1"/>
    <property type="molecule type" value="mRNA"/>
</dbReference>
<dbReference type="EMBL" id="AY325766">
    <property type="protein sequence ID" value="AAQ17190.1"/>
    <property type="molecule type" value="mRNA"/>
</dbReference>
<dbReference type="EMBL" id="AP003717">
    <property type="status" value="NOT_ANNOTATED_CDS"/>
    <property type="molecule type" value="Genomic_DNA"/>
</dbReference>
<dbReference type="EMBL" id="CH471076">
    <property type="protein sequence ID" value="EAW74920.1"/>
    <property type="molecule type" value="Genomic_DNA"/>
</dbReference>
<dbReference type="CCDS" id="CCDS8227.1">
    <molecule id="P59910-1"/>
</dbReference>
<dbReference type="RefSeq" id="NP_705842.2">
    <molecule id="P59910-1"/>
    <property type="nucleotide sequence ID" value="NM_153614.3"/>
</dbReference>
<dbReference type="PDB" id="8J07">
    <property type="method" value="EM"/>
    <property type="resolution" value="4.10 A"/>
    <property type="chains" value="U/V/u/v=1-316"/>
</dbReference>
<dbReference type="PDBsum" id="8J07"/>
<dbReference type="EMDB" id="EMD-35888"/>
<dbReference type="SMR" id="P59910"/>
<dbReference type="BioGRID" id="131900">
    <property type="interactions" value="46"/>
</dbReference>
<dbReference type="ComplexPortal" id="CPX-8163">
    <property type="entry name" value="Radial spoke complex, ciliiar variant"/>
</dbReference>
<dbReference type="ComplexPortal" id="CPX-8164">
    <property type="entry name" value="Radial spoke complex, flagellar variant"/>
</dbReference>
<dbReference type="FunCoup" id="P59910">
    <property type="interactions" value="50"/>
</dbReference>
<dbReference type="IntAct" id="P59910">
    <property type="interactions" value="14"/>
</dbReference>
<dbReference type="MINT" id="P59910"/>
<dbReference type="STRING" id="9606.ENSP00000344431"/>
<dbReference type="GlyGen" id="P59910">
    <property type="glycosylation" value="1 site, 1 O-linked glycan (1 site)"/>
</dbReference>
<dbReference type="iPTMnet" id="P59910"/>
<dbReference type="PhosphoSitePlus" id="P59910"/>
<dbReference type="BioMuta" id="DNAJB13"/>
<dbReference type="DMDM" id="41704179"/>
<dbReference type="MassIVE" id="P59910"/>
<dbReference type="PaxDb" id="9606-ENSP00000344431"/>
<dbReference type="PeptideAtlas" id="P59910"/>
<dbReference type="ProteomicsDB" id="57169">
    <molecule id="P59910-1"/>
</dbReference>
<dbReference type="ProteomicsDB" id="57170">
    <molecule id="P59910-2"/>
</dbReference>
<dbReference type="Antibodypedia" id="31001">
    <property type="antibodies" value="79 antibodies from 21 providers"/>
</dbReference>
<dbReference type="DNASU" id="374407"/>
<dbReference type="Ensembl" id="ENST00000339764.6">
    <molecule id="P59910-1"/>
    <property type="protein sequence ID" value="ENSP00000344431.1"/>
    <property type="gene ID" value="ENSG00000187726.9"/>
</dbReference>
<dbReference type="Ensembl" id="ENST00000537753.5">
    <molecule id="P59910-2"/>
    <property type="protein sequence ID" value="ENSP00000439711.1"/>
    <property type="gene ID" value="ENSG00000187726.9"/>
</dbReference>
<dbReference type="Ensembl" id="ENST00000543947.1">
    <molecule id="P59910-2"/>
    <property type="protein sequence ID" value="ENSP00000438576.1"/>
    <property type="gene ID" value="ENSG00000187726.9"/>
</dbReference>
<dbReference type="GeneID" id="374407"/>
<dbReference type="KEGG" id="hsa:374407"/>
<dbReference type="MANE-Select" id="ENST00000339764.6">
    <property type="protein sequence ID" value="ENSP00000344431.1"/>
    <property type="RefSeq nucleotide sequence ID" value="NM_153614.4"/>
    <property type="RefSeq protein sequence ID" value="NP_705842.2"/>
</dbReference>
<dbReference type="UCSC" id="uc001ouo.3">
    <molecule id="P59910-1"/>
    <property type="organism name" value="human"/>
</dbReference>
<dbReference type="AGR" id="HGNC:30718"/>
<dbReference type="CTD" id="374407"/>
<dbReference type="DisGeNET" id="374407"/>
<dbReference type="GeneCards" id="DNAJB13"/>
<dbReference type="HGNC" id="HGNC:30718">
    <property type="gene designation" value="DNAJB13"/>
</dbReference>
<dbReference type="HPA" id="ENSG00000187726">
    <property type="expression patterns" value="Group enriched (choroid plexus, fallopian tube, testis)"/>
</dbReference>
<dbReference type="MalaCards" id="DNAJB13"/>
<dbReference type="MIM" id="610263">
    <property type="type" value="gene"/>
</dbReference>
<dbReference type="MIM" id="617091">
    <property type="type" value="phenotype"/>
</dbReference>
<dbReference type="neXtProt" id="NX_P59910"/>
<dbReference type="OpenTargets" id="ENSG00000187726"/>
<dbReference type="Orphanet" id="244">
    <property type="disease" value="Primary ciliary dyskinesia"/>
</dbReference>
<dbReference type="PharmGKB" id="PA142671972"/>
<dbReference type="VEuPathDB" id="HostDB:ENSG00000187726"/>
<dbReference type="eggNOG" id="KOG0714">
    <property type="taxonomic scope" value="Eukaryota"/>
</dbReference>
<dbReference type="GeneTree" id="ENSGT00940000158090"/>
<dbReference type="HOGENOM" id="CLU_017633_10_2_1"/>
<dbReference type="InParanoid" id="P59910"/>
<dbReference type="OMA" id="SSKYVYH"/>
<dbReference type="OrthoDB" id="550424at2759"/>
<dbReference type="PAN-GO" id="P59910">
    <property type="GO annotations" value="4 GO annotations based on evolutionary models"/>
</dbReference>
<dbReference type="PhylomeDB" id="P59910"/>
<dbReference type="TreeFam" id="TF105141"/>
<dbReference type="PathwayCommons" id="P59910"/>
<dbReference type="SignaLink" id="P59910"/>
<dbReference type="BioGRID-ORCS" id="374407">
    <property type="hits" value="32 hits in 1155 CRISPR screens"/>
</dbReference>
<dbReference type="CD-CODE" id="91857CE7">
    <property type="entry name" value="Nucleolus"/>
</dbReference>
<dbReference type="ChiTaRS" id="DNAJB13">
    <property type="organism name" value="human"/>
</dbReference>
<dbReference type="GenomeRNAi" id="374407"/>
<dbReference type="Pharos" id="P59910">
    <property type="development level" value="Tbio"/>
</dbReference>
<dbReference type="PRO" id="PR:P59910"/>
<dbReference type="Proteomes" id="UP000005640">
    <property type="component" value="Chromosome 11"/>
</dbReference>
<dbReference type="RNAct" id="P59910">
    <property type="molecule type" value="protein"/>
</dbReference>
<dbReference type="Bgee" id="ENSG00000187726">
    <property type="expression patterns" value="Expressed in right uterine tube and 114 other cell types or tissues"/>
</dbReference>
<dbReference type="ExpressionAtlas" id="P59910">
    <property type="expression patterns" value="baseline and differential"/>
</dbReference>
<dbReference type="GO" id="GO:0005829">
    <property type="term" value="C:cytosol"/>
    <property type="evidence" value="ECO:0000318"/>
    <property type="project" value="GO_Central"/>
</dbReference>
<dbReference type="GO" id="GO:0031514">
    <property type="term" value="C:motile cilium"/>
    <property type="evidence" value="ECO:0000314"/>
    <property type="project" value="UniProtKB"/>
</dbReference>
<dbReference type="GO" id="GO:0001534">
    <property type="term" value="C:radial spoke"/>
    <property type="evidence" value="ECO:0000250"/>
    <property type="project" value="UniProtKB"/>
</dbReference>
<dbReference type="GO" id="GO:0036126">
    <property type="term" value="C:sperm flagellum"/>
    <property type="evidence" value="ECO:0000314"/>
    <property type="project" value="UniProtKB"/>
</dbReference>
<dbReference type="GO" id="GO:0120212">
    <property type="term" value="C:sperm head-tail coupling apparatus"/>
    <property type="evidence" value="ECO:0000250"/>
    <property type="project" value="UniProtKB"/>
</dbReference>
<dbReference type="GO" id="GO:0051087">
    <property type="term" value="F:protein-folding chaperone binding"/>
    <property type="evidence" value="ECO:0000318"/>
    <property type="project" value="GO_Central"/>
</dbReference>
<dbReference type="GO" id="GO:0051082">
    <property type="term" value="F:unfolded protein binding"/>
    <property type="evidence" value="ECO:0000318"/>
    <property type="project" value="GO_Central"/>
</dbReference>
<dbReference type="GO" id="GO:1904158">
    <property type="term" value="P:axonemal central apparatus assembly"/>
    <property type="evidence" value="ECO:0000315"/>
    <property type="project" value="UniProtKB"/>
</dbReference>
<dbReference type="GO" id="GO:0051085">
    <property type="term" value="P:chaperone cofactor-dependent protein refolding"/>
    <property type="evidence" value="ECO:0000318"/>
    <property type="project" value="GO_Central"/>
</dbReference>
<dbReference type="CDD" id="cd06257">
    <property type="entry name" value="DnaJ"/>
    <property type="match status" value="1"/>
</dbReference>
<dbReference type="CDD" id="cd10747">
    <property type="entry name" value="DnaJ_C"/>
    <property type="match status" value="1"/>
</dbReference>
<dbReference type="FunFam" id="2.60.260.20:FF:000002">
    <property type="entry name" value="Dnaj homolog subfamily b member"/>
    <property type="match status" value="1"/>
</dbReference>
<dbReference type="FunFam" id="1.10.287.110:FF:000033">
    <property type="entry name" value="dnaJ homolog subfamily B member 13"/>
    <property type="match status" value="1"/>
</dbReference>
<dbReference type="FunFam" id="2.60.260.20:FF:000006">
    <property type="entry name" value="DnaJ subfamily B member 13"/>
    <property type="match status" value="1"/>
</dbReference>
<dbReference type="Gene3D" id="1.10.287.110">
    <property type="entry name" value="DnaJ domain"/>
    <property type="match status" value="1"/>
</dbReference>
<dbReference type="Gene3D" id="2.60.260.20">
    <property type="entry name" value="Urease metallochaperone UreE, N-terminal domain"/>
    <property type="match status" value="2"/>
</dbReference>
<dbReference type="InterPro" id="IPR002939">
    <property type="entry name" value="DnaJ_C"/>
</dbReference>
<dbReference type="InterPro" id="IPR001623">
    <property type="entry name" value="DnaJ_domain"/>
</dbReference>
<dbReference type="InterPro" id="IPR018253">
    <property type="entry name" value="DnaJ_domain_CS"/>
</dbReference>
<dbReference type="InterPro" id="IPR051339">
    <property type="entry name" value="DnaJ_subfamily_B"/>
</dbReference>
<dbReference type="InterPro" id="IPR008971">
    <property type="entry name" value="HSP40/DnaJ_pept-bd"/>
</dbReference>
<dbReference type="InterPro" id="IPR036869">
    <property type="entry name" value="J_dom_sf"/>
</dbReference>
<dbReference type="PANTHER" id="PTHR24078:SF519">
    <property type="entry name" value="DNAJ HOMOLOG SUBFAMILY B MEMBER 13"/>
    <property type="match status" value="1"/>
</dbReference>
<dbReference type="PANTHER" id="PTHR24078">
    <property type="entry name" value="DNAJ HOMOLOG SUBFAMILY C MEMBER"/>
    <property type="match status" value="1"/>
</dbReference>
<dbReference type="Pfam" id="PF00226">
    <property type="entry name" value="DnaJ"/>
    <property type="match status" value="1"/>
</dbReference>
<dbReference type="Pfam" id="PF01556">
    <property type="entry name" value="DnaJ_C"/>
    <property type="match status" value="1"/>
</dbReference>
<dbReference type="PRINTS" id="PR00625">
    <property type="entry name" value="JDOMAIN"/>
</dbReference>
<dbReference type="SMART" id="SM00271">
    <property type="entry name" value="DnaJ"/>
    <property type="match status" value="1"/>
</dbReference>
<dbReference type="SUPFAM" id="SSF46565">
    <property type="entry name" value="Chaperone J-domain"/>
    <property type="match status" value="1"/>
</dbReference>
<dbReference type="SUPFAM" id="SSF49493">
    <property type="entry name" value="HSP40/DnaJ peptide-binding domain"/>
    <property type="match status" value="2"/>
</dbReference>
<dbReference type="PROSITE" id="PS00636">
    <property type="entry name" value="DNAJ_1"/>
    <property type="match status" value="1"/>
</dbReference>
<dbReference type="PROSITE" id="PS50076">
    <property type="entry name" value="DNAJ_2"/>
    <property type="match status" value="1"/>
</dbReference>
<protein>
    <recommendedName>
        <fullName>DnaJ homolog subfamily B member 13</fullName>
    </recommendedName>
    <alternativeName>
        <fullName>Testis and spermatogenesis cell-related protein 6</fullName>
    </alternativeName>
    <alternativeName>
        <fullName>Testis spermatocyte apoptosis-related gene 6 protein</fullName>
    </alternativeName>
    <alternativeName>
        <fullName>Testis spermatogenesis apoptosis-related gene 3 protein</fullName>
    </alternativeName>
    <alternativeName>
        <fullName>Testis spermatogenesis apoptosis-related gene 6 protein</fullName>
    </alternativeName>
</protein>
<reference key="1">
    <citation type="journal article" date="2003" name="Zhonghua Yi Xue Yi Chuan Xue Za Zhi">
        <title>Molecular cloning of TSARG3 gene related to apoptosis in human spermatogenic cells.</title>
        <authorList>
            <person name="Liu G."/>
            <person name="Lu G.-X."/>
            <person name="Fu J.-J."/>
            <person name="Liu S.-F."/>
            <person name="Xing X.-W."/>
            <person name="Li L."/>
        </authorList>
    </citation>
    <scope>NUCLEOTIDE SEQUENCE [MRNA] (ISOFORMS 1 AND 2)</scope>
    <source>
        <tissue>Testis</tissue>
    </source>
</reference>
<reference key="2">
    <citation type="submission" date="2003-06" db="EMBL/GenBank/DDBJ databases">
        <title>Cloning and characterization of a novel human and rat DnaJ gene.</title>
        <authorList>
            <person name="Shan Y.X."/>
            <person name="Huang C.Q."/>
            <person name="Yu L."/>
        </authorList>
    </citation>
    <scope>NUCLEOTIDE SEQUENCE [MRNA] (ISOFORM 1)</scope>
</reference>
<reference key="3">
    <citation type="journal article" date="2006" name="Nature">
        <title>Human chromosome 11 DNA sequence and analysis including novel gene identification.</title>
        <authorList>
            <person name="Taylor T.D."/>
            <person name="Noguchi H."/>
            <person name="Totoki Y."/>
            <person name="Toyoda A."/>
            <person name="Kuroki Y."/>
            <person name="Dewar K."/>
            <person name="Lloyd C."/>
            <person name="Itoh T."/>
            <person name="Takeda T."/>
            <person name="Kim D.-W."/>
            <person name="She X."/>
            <person name="Barlow K.F."/>
            <person name="Bloom T."/>
            <person name="Bruford E."/>
            <person name="Chang J.L."/>
            <person name="Cuomo C.A."/>
            <person name="Eichler E."/>
            <person name="FitzGerald M.G."/>
            <person name="Jaffe D.B."/>
            <person name="LaButti K."/>
            <person name="Nicol R."/>
            <person name="Park H.-S."/>
            <person name="Seaman C."/>
            <person name="Sougnez C."/>
            <person name="Yang X."/>
            <person name="Zimmer A.R."/>
            <person name="Zody M.C."/>
            <person name="Birren B.W."/>
            <person name="Nusbaum C."/>
            <person name="Fujiyama A."/>
            <person name="Hattori M."/>
            <person name="Rogers J."/>
            <person name="Lander E.S."/>
            <person name="Sakaki Y."/>
        </authorList>
    </citation>
    <scope>NUCLEOTIDE SEQUENCE [LARGE SCALE GENOMIC DNA]</scope>
</reference>
<reference key="4">
    <citation type="submission" date="2005-07" db="EMBL/GenBank/DDBJ databases">
        <authorList>
            <person name="Mural R.J."/>
            <person name="Istrail S."/>
            <person name="Sutton G."/>
            <person name="Florea L."/>
            <person name="Halpern A.L."/>
            <person name="Mobarry C.M."/>
            <person name="Lippert R."/>
            <person name="Walenz B."/>
            <person name="Shatkay H."/>
            <person name="Dew I."/>
            <person name="Miller J.R."/>
            <person name="Flanigan M.J."/>
            <person name="Edwards N.J."/>
            <person name="Bolanos R."/>
            <person name="Fasulo D."/>
            <person name="Halldorsson B.V."/>
            <person name="Hannenhalli S."/>
            <person name="Turner R."/>
            <person name="Yooseph S."/>
            <person name="Lu F."/>
            <person name="Nusskern D.R."/>
            <person name="Shue B.C."/>
            <person name="Zheng X.H."/>
            <person name="Zhong F."/>
            <person name="Delcher A.L."/>
            <person name="Huson D.H."/>
            <person name="Kravitz S.A."/>
            <person name="Mouchard L."/>
            <person name="Reinert K."/>
            <person name="Remington K.A."/>
            <person name="Clark A.G."/>
            <person name="Waterman M.S."/>
            <person name="Eichler E.E."/>
            <person name="Adams M.D."/>
            <person name="Hunkapiller M.W."/>
            <person name="Myers E.W."/>
            <person name="Venter J.C."/>
        </authorList>
    </citation>
    <scope>NUCLEOTIDE SEQUENCE [LARGE SCALE GENOMIC DNA]</scope>
</reference>
<reference key="5">
    <citation type="journal article" date="2016" name="Am. J. Hum. Genet.">
        <title>Mutations in DNAJB13, Encoding an HSP40 Family Member, Cause Primary Ciliary Dyskinesia and Male Infertility.</title>
        <authorList>
            <person name="El Khouri E."/>
            <person name="Thomas L."/>
            <person name="Jeanson L."/>
            <person name="Bequignon E."/>
            <person name="Vallette B."/>
            <person name="Duquesnoy P."/>
            <person name="Montantin G."/>
            <person name="Copin B."/>
            <person name="Dastot-Le Moal F."/>
            <person name="Blanchon S."/>
            <person name="Papon J.F."/>
            <person name="Lores P."/>
            <person name="Yuan L."/>
            <person name="Collot N."/>
            <person name="Tissier S."/>
            <person name="Faucon C."/>
            <person name="Gacon G."/>
            <person name="Patrat C."/>
            <person name="Wolf J.P."/>
            <person name="Dulioust E."/>
            <person name="Crestani B."/>
            <person name="Escudier E."/>
            <person name="Coste A."/>
            <person name="Legendre M."/>
            <person name="Toure A."/>
            <person name="Amselem S."/>
        </authorList>
    </citation>
    <scope>INVOLVEMENT IN CILD34</scope>
    <scope>VARIANT CILD34 ARG-278</scope>
    <scope>CHARACTERIZATION OF VARIANT CILD34 ARG-278</scope>
    <scope>FUNCTION</scope>
    <scope>SUBUNIT</scope>
    <scope>SUBCELLULAR LOCATION</scope>
    <scope>TISSUE SPECIFICITY</scope>
</reference>
<keyword id="KW-0002">3D-structure</keyword>
<keyword id="KW-0025">Alternative splicing</keyword>
<keyword id="KW-0966">Cell projection</keyword>
<keyword id="KW-0143">Chaperone</keyword>
<keyword id="KW-1186">Ciliopathy</keyword>
<keyword id="KW-0969">Cilium</keyword>
<keyword id="KW-0970">Cilium biogenesis/degradation</keyword>
<keyword id="KW-0225">Disease variant</keyword>
<keyword id="KW-0282">Flagellum</keyword>
<keyword id="KW-0990">Primary ciliary dyskinesia</keyword>
<keyword id="KW-1267">Proteomics identification</keyword>
<keyword id="KW-1185">Reference proteome</keyword>
<name>DJB13_HUMAN</name>
<proteinExistence type="evidence at protein level"/>
<accession>P59910</accession>
<accession>B3LEP4</accession>
<accession>Q8IZW5</accession>
<evidence type="ECO:0000250" key="1">
    <source>
        <dbReference type="UniProtKB" id="Q80Y75"/>
    </source>
</evidence>
<evidence type="ECO:0000255" key="2">
    <source>
        <dbReference type="PROSITE-ProRule" id="PRU00286"/>
    </source>
</evidence>
<evidence type="ECO:0000269" key="3">
    <source>
    </source>
</evidence>
<evidence type="ECO:0000303" key="4">
    <source>
    </source>
</evidence>
<gene>
    <name type="primary">DNAJB13</name>
    <name type="synonym">TSARG3</name>
    <name type="synonym">TSARG6</name>
</gene>